<keyword id="KW-0274">FAD</keyword>
<keyword id="KW-0285">Flavoprotein</keyword>
<keyword id="KW-0489">Methyltransferase</keyword>
<keyword id="KW-0521">NADP</keyword>
<keyword id="KW-0545">Nucleotide biosynthesis</keyword>
<keyword id="KW-1185">Reference proteome</keyword>
<keyword id="KW-0808">Transferase</keyword>
<accession>Q9HQ52</accession>
<accession>Q9C4Y9</accession>
<reference key="1">
    <citation type="submission" date="2000-01" db="EMBL/GenBank/DDBJ databases">
        <title>Halobacterium salinarum gene that complements a deletion in Haloferax volcanii thymidylate synthase.</title>
        <authorList>
            <person name="Ortenberg R."/>
            <person name="Bitan-Banin G."/>
            <person name="Mevarech M."/>
        </authorList>
    </citation>
    <scope>NUCLEOTIDE SEQUENCE [GENOMIC DNA]</scope>
    <source>
        <strain>R1 / S9</strain>
    </source>
</reference>
<reference key="2">
    <citation type="journal article" date="2000" name="Proc. Natl. Acad. Sci. U.S.A.">
        <title>Genome sequence of Halobacterium species NRC-1.</title>
        <authorList>
            <person name="Ng W.V."/>
            <person name="Kennedy S.P."/>
            <person name="Mahairas G.G."/>
            <person name="Berquist B."/>
            <person name="Pan M."/>
            <person name="Shukla H.D."/>
            <person name="Lasky S.R."/>
            <person name="Baliga N.S."/>
            <person name="Thorsson V."/>
            <person name="Sbrogna J."/>
            <person name="Swartzell S."/>
            <person name="Weir D."/>
            <person name="Hall J."/>
            <person name="Dahl T.A."/>
            <person name="Welti R."/>
            <person name="Goo Y.A."/>
            <person name="Leithauser B."/>
            <person name="Keller K."/>
            <person name="Cruz R."/>
            <person name="Danson M.J."/>
            <person name="Hough D.W."/>
            <person name="Maddocks D.G."/>
            <person name="Jablonski P.E."/>
            <person name="Krebs M.P."/>
            <person name="Angevine C.M."/>
            <person name="Dale H."/>
            <person name="Isenbarger T.A."/>
            <person name="Peck R.F."/>
            <person name="Pohlschroder M."/>
            <person name="Spudich J.L."/>
            <person name="Jung K.-H."/>
            <person name="Alam M."/>
            <person name="Freitas T."/>
            <person name="Hou S."/>
            <person name="Daniels C.J."/>
            <person name="Dennis P.P."/>
            <person name="Omer A.D."/>
            <person name="Ebhardt H."/>
            <person name="Lowe T.M."/>
            <person name="Liang P."/>
            <person name="Riley M."/>
            <person name="Hood L."/>
            <person name="DasSarma S."/>
        </authorList>
    </citation>
    <scope>NUCLEOTIDE SEQUENCE [LARGE SCALE GENOMIC DNA]</scope>
    <source>
        <strain>ATCC 700922 / JCM 11081 / NRC-1</strain>
    </source>
</reference>
<organism>
    <name type="scientific">Halobacterium salinarum (strain ATCC 700922 / JCM 11081 / NRC-1)</name>
    <name type="common">Halobacterium halobium</name>
    <dbReference type="NCBI Taxonomy" id="64091"/>
    <lineage>
        <taxon>Archaea</taxon>
        <taxon>Methanobacteriati</taxon>
        <taxon>Methanobacteriota</taxon>
        <taxon>Stenosarchaea group</taxon>
        <taxon>Halobacteria</taxon>
        <taxon>Halobacteriales</taxon>
        <taxon>Halobacteriaceae</taxon>
        <taxon>Halobacterium</taxon>
        <taxon>Halobacterium salinarum NRC-34001</taxon>
    </lineage>
</organism>
<dbReference type="EC" id="2.1.1.148" evidence="1"/>
<dbReference type="EMBL" id="AF227235">
    <property type="protein sequence ID" value="AAK00648.1"/>
    <property type="molecule type" value="Genomic_DNA"/>
</dbReference>
<dbReference type="EMBL" id="AE004437">
    <property type="protein sequence ID" value="AAG19665.1"/>
    <property type="status" value="ALT_INIT"/>
    <property type="molecule type" value="Genomic_DNA"/>
</dbReference>
<dbReference type="PIR" id="E84287">
    <property type="entry name" value="E84287"/>
</dbReference>
<dbReference type="RefSeq" id="WP_012289309.1">
    <property type="nucleotide sequence ID" value="NC_002607.1"/>
</dbReference>
<dbReference type="SMR" id="Q9HQ52"/>
<dbReference type="STRING" id="64091.VNG_1325C"/>
<dbReference type="PaxDb" id="64091-VNG_1325C"/>
<dbReference type="GeneID" id="68694070"/>
<dbReference type="KEGG" id="hal:VNG_1325C"/>
<dbReference type="PATRIC" id="fig|64091.14.peg.1013"/>
<dbReference type="HOGENOM" id="CLU_077585_0_0_2"/>
<dbReference type="InParanoid" id="Q9HQ52"/>
<dbReference type="OrthoDB" id="18918at2157"/>
<dbReference type="PhylomeDB" id="Q9HQ52"/>
<dbReference type="UniPathway" id="UPA00575"/>
<dbReference type="Proteomes" id="UP000000554">
    <property type="component" value="Chromosome"/>
</dbReference>
<dbReference type="GO" id="GO:0050660">
    <property type="term" value="F:flavin adenine dinucleotide binding"/>
    <property type="evidence" value="ECO:0000318"/>
    <property type="project" value="GO_Central"/>
</dbReference>
<dbReference type="GO" id="GO:0070402">
    <property type="term" value="F:NADPH binding"/>
    <property type="evidence" value="ECO:0000318"/>
    <property type="project" value="GO_Central"/>
</dbReference>
<dbReference type="GO" id="GO:0050797">
    <property type="term" value="F:thymidylate synthase (FAD) activity"/>
    <property type="evidence" value="ECO:0000318"/>
    <property type="project" value="GO_Central"/>
</dbReference>
<dbReference type="GO" id="GO:0004799">
    <property type="term" value="F:thymidylate synthase activity"/>
    <property type="evidence" value="ECO:0000318"/>
    <property type="project" value="GO_Central"/>
</dbReference>
<dbReference type="GO" id="GO:0006231">
    <property type="term" value="P:dTMP biosynthetic process"/>
    <property type="evidence" value="ECO:0000318"/>
    <property type="project" value="GO_Central"/>
</dbReference>
<dbReference type="GO" id="GO:0006235">
    <property type="term" value="P:dTTP biosynthetic process"/>
    <property type="evidence" value="ECO:0007669"/>
    <property type="project" value="UniProtKB-UniRule"/>
</dbReference>
<dbReference type="GO" id="GO:0032259">
    <property type="term" value="P:methylation"/>
    <property type="evidence" value="ECO:0007669"/>
    <property type="project" value="UniProtKB-KW"/>
</dbReference>
<dbReference type="CDD" id="cd20175">
    <property type="entry name" value="ThyX"/>
    <property type="match status" value="1"/>
</dbReference>
<dbReference type="Gene3D" id="3.30.1360.170">
    <property type="match status" value="1"/>
</dbReference>
<dbReference type="HAMAP" id="MF_01408">
    <property type="entry name" value="ThyX"/>
    <property type="match status" value="1"/>
</dbReference>
<dbReference type="InterPro" id="IPR003669">
    <property type="entry name" value="Thymidylate_synthase_ThyX"/>
</dbReference>
<dbReference type="InterPro" id="IPR036098">
    <property type="entry name" value="Thymidylate_synthase_ThyX_sf"/>
</dbReference>
<dbReference type="NCBIfam" id="TIGR02170">
    <property type="entry name" value="thyX"/>
    <property type="match status" value="1"/>
</dbReference>
<dbReference type="PANTHER" id="PTHR34934">
    <property type="entry name" value="FLAVIN-DEPENDENT THYMIDYLATE SYNTHASE"/>
    <property type="match status" value="1"/>
</dbReference>
<dbReference type="PANTHER" id="PTHR34934:SF1">
    <property type="entry name" value="FLAVIN-DEPENDENT THYMIDYLATE SYNTHASE"/>
    <property type="match status" value="1"/>
</dbReference>
<dbReference type="Pfam" id="PF02511">
    <property type="entry name" value="Thy1"/>
    <property type="match status" value="1"/>
</dbReference>
<dbReference type="SUPFAM" id="SSF69796">
    <property type="entry name" value="Thymidylate synthase-complementing protein Thy1"/>
    <property type="match status" value="1"/>
</dbReference>
<dbReference type="PROSITE" id="PS51331">
    <property type="entry name" value="THYX"/>
    <property type="match status" value="1"/>
</dbReference>
<proteinExistence type="inferred from homology"/>
<protein>
    <recommendedName>
        <fullName evidence="1">Flavin-dependent thymidylate synthase</fullName>
        <shortName evidence="1">FDTS</shortName>
        <ecNumber evidence="1">2.1.1.148</ecNumber>
    </recommendedName>
    <alternativeName>
        <fullName evidence="1">FAD-dependent thymidylate synthase</fullName>
    </alternativeName>
    <alternativeName>
        <fullName evidence="1">Thymidylate synthase ThyX</fullName>
        <shortName evidence="1">TS</shortName>
        <shortName evidence="1">TSase</shortName>
    </alternativeName>
</protein>
<sequence length="247" mass="27622">MRVRLLEATENPEELICQSARNDYMSDWVGDTPLDTAMASVDGDTTDEKLSNLIAQLLTRGHYGPFEHPSATFAIEGVSRSCMAQLTRHRHASFDVQSMRYVAFDDVDPAAVAEGELVVTPPSATDPDWVGRNQDAGDIDEETMAEREAVFQASVRRAVEDYQELLGLGMPPEDARFVLPIGTEVNVVITLNPRSLMHVADMRAAADAQWEIRELTEQLLDAAAQWCPHTFEYYDAEMKHRKNRLAP</sequence>
<gene>
    <name evidence="1" type="primary">thyX</name>
    <name type="ordered locus">VNG_1325C</name>
</gene>
<feature type="chain" id="PRO_0000175590" description="Flavin-dependent thymidylate synthase">
    <location>
        <begin position="1"/>
        <end position="247"/>
    </location>
</feature>
<feature type="domain" description="ThyX" evidence="2">
    <location>
        <begin position="1"/>
        <end position="237"/>
    </location>
</feature>
<feature type="short sequence motif" description="ThyX motif" evidence="1">
    <location>
        <begin position="88"/>
        <end position="98"/>
    </location>
</feature>
<feature type="active site" description="Involved in ionization of N3 of dUMP, leading to its activation" evidence="1">
    <location>
        <position position="203"/>
    </location>
</feature>
<feature type="binding site" evidence="1">
    <location>
        <begin position="85"/>
        <end position="88"/>
    </location>
    <ligand>
        <name>dUMP</name>
        <dbReference type="ChEBI" id="CHEBI:246422"/>
        <note>ligand shared between dimeric partners</note>
    </ligand>
</feature>
<feature type="binding site" evidence="1">
    <location>
        <begin position="88"/>
        <end position="90"/>
    </location>
    <ligand>
        <name>FAD</name>
        <dbReference type="ChEBI" id="CHEBI:57692"/>
        <note>ligand shared between neighboring subunits</note>
    </ligand>
</feature>
<feature type="binding site" description="in other chain" evidence="1">
    <location>
        <begin position="98"/>
        <end position="100"/>
    </location>
    <ligand>
        <name>dUMP</name>
        <dbReference type="ChEBI" id="CHEBI:246422"/>
        <note>ligand shared between dimeric partners</note>
    </ligand>
</feature>
<feature type="binding site" description="in other chain" evidence="1">
    <location>
        <position position="176"/>
    </location>
    <ligand>
        <name>dUMP</name>
        <dbReference type="ChEBI" id="CHEBI:246422"/>
        <note>ligand shared between dimeric partners</note>
    </ligand>
</feature>
<feature type="binding site" evidence="1">
    <location>
        <begin position="192"/>
        <end position="194"/>
    </location>
    <ligand>
        <name>FAD</name>
        <dbReference type="ChEBI" id="CHEBI:57692"/>
        <note>ligand shared between neighboring subunits</note>
    </ligand>
</feature>
<feature type="binding site" evidence="1">
    <location>
        <position position="198"/>
    </location>
    <ligand>
        <name>FAD</name>
        <dbReference type="ChEBI" id="CHEBI:57692"/>
        <note>ligand shared between neighboring subunits</note>
    </ligand>
</feature>
<feature type="binding site" evidence="1">
    <location>
        <position position="203"/>
    </location>
    <ligand>
        <name>dUMP</name>
        <dbReference type="ChEBI" id="CHEBI:246422"/>
        <note>ligand shared between dimeric partners</note>
    </ligand>
</feature>
<feature type="sequence conflict" description="In Ref. 1; AAK00648." evidence="3" ref="1">
    <original>E</original>
    <variation>Q</variation>
    <location>
        <position position="148"/>
    </location>
</feature>
<feature type="sequence conflict" description="In Ref. 1; AAK00648." evidence="3" ref="1">
    <original>E</original>
    <variation>V</variation>
    <location>
        <position position="173"/>
    </location>
</feature>
<evidence type="ECO:0000255" key="1">
    <source>
        <dbReference type="HAMAP-Rule" id="MF_01408"/>
    </source>
</evidence>
<evidence type="ECO:0000255" key="2">
    <source>
        <dbReference type="PROSITE-ProRule" id="PRU00661"/>
    </source>
</evidence>
<evidence type="ECO:0000305" key="3"/>
<comment type="function">
    <text evidence="1">Catalyzes the reductive methylation of 2'-deoxyuridine-5'-monophosphate (dUMP) to 2'-deoxythymidine-5'-monophosphate (dTMP) while utilizing 5,10-methylenetetrahydrofolate (mTHF) as the methyl donor, and NADPH and FADH(2) as the reductant.</text>
</comment>
<comment type="catalytic activity">
    <reaction evidence="1">
        <text>dUMP + (6R)-5,10-methylene-5,6,7,8-tetrahydrofolate + NADPH + H(+) = dTMP + (6S)-5,6,7,8-tetrahydrofolate + NADP(+)</text>
        <dbReference type="Rhea" id="RHEA:29043"/>
        <dbReference type="ChEBI" id="CHEBI:15378"/>
        <dbReference type="ChEBI" id="CHEBI:15636"/>
        <dbReference type="ChEBI" id="CHEBI:57453"/>
        <dbReference type="ChEBI" id="CHEBI:57783"/>
        <dbReference type="ChEBI" id="CHEBI:58349"/>
        <dbReference type="ChEBI" id="CHEBI:63528"/>
        <dbReference type="ChEBI" id="CHEBI:246422"/>
        <dbReference type="EC" id="2.1.1.148"/>
    </reaction>
</comment>
<comment type="cofactor">
    <cofactor evidence="1">
        <name>FAD</name>
        <dbReference type="ChEBI" id="CHEBI:57692"/>
    </cofactor>
    <text evidence="1">Binds 4 FAD per tetramer. Each FAD binding site is formed by three monomers.</text>
</comment>
<comment type="pathway">
    <text evidence="1">Pyrimidine metabolism; dTTP biosynthesis.</text>
</comment>
<comment type="subunit">
    <text evidence="1">Homotetramer.</text>
</comment>
<comment type="similarity">
    <text evidence="1">Belongs to the thymidylate synthase ThyX family.</text>
</comment>
<comment type="sequence caution" evidence="3">
    <conflict type="erroneous initiation">
        <sequence resource="EMBL-CDS" id="AAG19665"/>
    </conflict>
</comment>
<name>THYX_HALSA</name>